<name>DNAA_SHEDO</name>
<sequence length="462" mass="52242">MAVSLWQQCIGRLQDELSAQQFSMWIRPLQAEMDGDTLVLYAPNRFVLDWVRDKYINIINQFFTEQMGSNAPKLRFDIGSRPSARTVQPAPAAPRPTTGHTQTKARVGTAFNIQAEPMANANHRSNINPTYQFDNFVEGKSNQLGKAAAMQVAENPGGAYNPLFLYGGTGLGKTHLLHAVGNGIIKNNPNAKVVYMHSERFVQDMVKALQNNAIEEFKRYYRSVDALFIDDIQFFANKDRSQEEFFHTFNALLEGNHQIILTSDRYPKEIDGVEDRLKSRFGWGLTVAIEPPELETRVAILMRKAQESGINLPDEVAFFVAKRLRSNVRELEGALNRVIANANFTGRPITIDFVREALRDLLALQEKLVTIDNIQKTVAEYYKIKMADMLSKRRSRSVARPRQVAMALSKELTNQSLPEIGDAFGGRDHTTVLHACRKIAQLREESHDIKEDYANLIRTLSS</sequence>
<keyword id="KW-0067">ATP-binding</keyword>
<keyword id="KW-0963">Cytoplasm</keyword>
<keyword id="KW-0235">DNA replication</keyword>
<keyword id="KW-0238">DNA-binding</keyword>
<keyword id="KW-0446">Lipid-binding</keyword>
<keyword id="KW-0547">Nucleotide-binding</keyword>
<keyword id="KW-1185">Reference proteome</keyword>
<reference key="1">
    <citation type="submission" date="2006-03" db="EMBL/GenBank/DDBJ databases">
        <title>Complete sequence of Shewanella denitrificans OS217.</title>
        <authorList>
            <consortium name="US DOE Joint Genome Institute"/>
            <person name="Copeland A."/>
            <person name="Lucas S."/>
            <person name="Lapidus A."/>
            <person name="Barry K."/>
            <person name="Detter J.C."/>
            <person name="Glavina del Rio T."/>
            <person name="Hammon N."/>
            <person name="Israni S."/>
            <person name="Dalin E."/>
            <person name="Tice H."/>
            <person name="Pitluck S."/>
            <person name="Brettin T."/>
            <person name="Bruce D."/>
            <person name="Han C."/>
            <person name="Tapia R."/>
            <person name="Gilna P."/>
            <person name="Kiss H."/>
            <person name="Schmutz J."/>
            <person name="Larimer F."/>
            <person name="Land M."/>
            <person name="Hauser L."/>
            <person name="Kyrpides N."/>
            <person name="Lykidis A."/>
            <person name="Richardson P."/>
        </authorList>
    </citation>
    <scope>NUCLEOTIDE SEQUENCE [LARGE SCALE GENOMIC DNA]</scope>
    <source>
        <strain>OS217 / ATCC BAA-1090 / DSM 15013</strain>
    </source>
</reference>
<gene>
    <name evidence="1" type="primary">dnaA</name>
    <name type="ordered locus">Sden_0001</name>
</gene>
<proteinExistence type="inferred from homology"/>
<accession>Q12TC8</accession>
<dbReference type="EMBL" id="CP000302">
    <property type="protein sequence ID" value="ABE53298.1"/>
    <property type="molecule type" value="Genomic_DNA"/>
</dbReference>
<dbReference type="RefSeq" id="WP_011494467.1">
    <property type="nucleotide sequence ID" value="NC_007954.1"/>
</dbReference>
<dbReference type="SMR" id="Q12TC8"/>
<dbReference type="STRING" id="318161.Sden_0001"/>
<dbReference type="KEGG" id="sdn:Sden_0001"/>
<dbReference type="eggNOG" id="COG0593">
    <property type="taxonomic scope" value="Bacteria"/>
</dbReference>
<dbReference type="HOGENOM" id="CLU_026910_0_1_6"/>
<dbReference type="OrthoDB" id="9807019at2"/>
<dbReference type="Proteomes" id="UP000001982">
    <property type="component" value="Chromosome"/>
</dbReference>
<dbReference type="GO" id="GO:0005737">
    <property type="term" value="C:cytoplasm"/>
    <property type="evidence" value="ECO:0007669"/>
    <property type="project" value="UniProtKB-SubCell"/>
</dbReference>
<dbReference type="GO" id="GO:0005886">
    <property type="term" value="C:plasma membrane"/>
    <property type="evidence" value="ECO:0007669"/>
    <property type="project" value="TreeGrafter"/>
</dbReference>
<dbReference type="GO" id="GO:0005524">
    <property type="term" value="F:ATP binding"/>
    <property type="evidence" value="ECO:0007669"/>
    <property type="project" value="UniProtKB-UniRule"/>
</dbReference>
<dbReference type="GO" id="GO:0016887">
    <property type="term" value="F:ATP hydrolysis activity"/>
    <property type="evidence" value="ECO:0007669"/>
    <property type="project" value="InterPro"/>
</dbReference>
<dbReference type="GO" id="GO:0003688">
    <property type="term" value="F:DNA replication origin binding"/>
    <property type="evidence" value="ECO:0007669"/>
    <property type="project" value="UniProtKB-UniRule"/>
</dbReference>
<dbReference type="GO" id="GO:0008289">
    <property type="term" value="F:lipid binding"/>
    <property type="evidence" value="ECO:0007669"/>
    <property type="project" value="UniProtKB-KW"/>
</dbReference>
<dbReference type="GO" id="GO:0006270">
    <property type="term" value="P:DNA replication initiation"/>
    <property type="evidence" value="ECO:0007669"/>
    <property type="project" value="UniProtKB-UniRule"/>
</dbReference>
<dbReference type="GO" id="GO:0006275">
    <property type="term" value="P:regulation of DNA replication"/>
    <property type="evidence" value="ECO:0007669"/>
    <property type="project" value="UniProtKB-UniRule"/>
</dbReference>
<dbReference type="CDD" id="cd00009">
    <property type="entry name" value="AAA"/>
    <property type="match status" value="1"/>
</dbReference>
<dbReference type="CDD" id="cd06571">
    <property type="entry name" value="Bac_DnaA_C"/>
    <property type="match status" value="1"/>
</dbReference>
<dbReference type="FunFam" id="1.10.1750.10:FF:000001">
    <property type="entry name" value="Chromosomal replication initiator protein DnaA"/>
    <property type="match status" value="1"/>
</dbReference>
<dbReference type="FunFam" id="1.10.8.60:FF:000003">
    <property type="entry name" value="Chromosomal replication initiator protein DnaA"/>
    <property type="match status" value="1"/>
</dbReference>
<dbReference type="FunFam" id="3.30.300.180:FF:000001">
    <property type="entry name" value="Chromosomal replication initiator protein DnaA"/>
    <property type="match status" value="1"/>
</dbReference>
<dbReference type="FunFam" id="3.40.50.300:FF:000103">
    <property type="entry name" value="Chromosomal replication initiator protein DnaA"/>
    <property type="match status" value="1"/>
</dbReference>
<dbReference type="Gene3D" id="1.10.1750.10">
    <property type="match status" value="1"/>
</dbReference>
<dbReference type="Gene3D" id="1.10.8.60">
    <property type="match status" value="1"/>
</dbReference>
<dbReference type="Gene3D" id="3.30.300.180">
    <property type="match status" value="1"/>
</dbReference>
<dbReference type="Gene3D" id="3.40.50.300">
    <property type="entry name" value="P-loop containing nucleotide triphosphate hydrolases"/>
    <property type="match status" value="1"/>
</dbReference>
<dbReference type="HAMAP" id="MF_00377">
    <property type="entry name" value="DnaA_bact"/>
    <property type="match status" value="1"/>
</dbReference>
<dbReference type="InterPro" id="IPR003593">
    <property type="entry name" value="AAA+_ATPase"/>
</dbReference>
<dbReference type="InterPro" id="IPR001957">
    <property type="entry name" value="Chromosome_initiator_DnaA"/>
</dbReference>
<dbReference type="InterPro" id="IPR020591">
    <property type="entry name" value="Chromosome_initiator_DnaA-like"/>
</dbReference>
<dbReference type="InterPro" id="IPR018312">
    <property type="entry name" value="Chromosome_initiator_DnaA_CS"/>
</dbReference>
<dbReference type="InterPro" id="IPR013159">
    <property type="entry name" value="DnaA_C"/>
</dbReference>
<dbReference type="InterPro" id="IPR013317">
    <property type="entry name" value="DnaA_dom"/>
</dbReference>
<dbReference type="InterPro" id="IPR024633">
    <property type="entry name" value="DnaA_N_dom"/>
</dbReference>
<dbReference type="InterPro" id="IPR038454">
    <property type="entry name" value="DnaA_N_sf"/>
</dbReference>
<dbReference type="InterPro" id="IPR055199">
    <property type="entry name" value="Hda_lid"/>
</dbReference>
<dbReference type="InterPro" id="IPR027417">
    <property type="entry name" value="P-loop_NTPase"/>
</dbReference>
<dbReference type="InterPro" id="IPR010921">
    <property type="entry name" value="Trp_repressor/repl_initiator"/>
</dbReference>
<dbReference type="NCBIfam" id="TIGR00362">
    <property type="entry name" value="DnaA"/>
    <property type="match status" value="1"/>
</dbReference>
<dbReference type="PANTHER" id="PTHR30050">
    <property type="entry name" value="CHROMOSOMAL REPLICATION INITIATOR PROTEIN DNAA"/>
    <property type="match status" value="1"/>
</dbReference>
<dbReference type="PANTHER" id="PTHR30050:SF2">
    <property type="entry name" value="CHROMOSOMAL REPLICATION INITIATOR PROTEIN DNAA"/>
    <property type="match status" value="1"/>
</dbReference>
<dbReference type="Pfam" id="PF00308">
    <property type="entry name" value="Bac_DnaA"/>
    <property type="match status" value="1"/>
</dbReference>
<dbReference type="Pfam" id="PF08299">
    <property type="entry name" value="Bac_DnaA_C"/>
    <property type="match status" value="1"/>
</dbReference>
<dbReference type="Pfam" id="PF11638">
    <property type="entry name" value="DnaA_N"/>
    <property type="match status" value="1"/>
</dbReference>
<dbReference type="Pfam" id="PF22688">
    <property type="entry name" value="Hda_lid"/>
    <property type="match status" value="1"/>
</dbReference>
<dbReference type="PRINTS" id="PR00051">
    <property type="entry name" value="DNAA"/>
</dbReference>
<dbReference type="SMART" id="SM00382">
    <property type="entry name" value="AAA"/>
    <property type="match status" value="1"/>
</dbReference>
<dbReference type="SMART" id="SM00760">
    <property type="entry name" value="Bac_DnaA_C"/>
    <property type="match status" value="1"/>
</dbReference>
<dbReference type="SUPFAM" id="SSF52540">
    <property type="entry name" value="P-loop containing nucleoside triphosphate hydrolases"/>
    <property type="match status" value="1"/>
</dbReference>
<dbReference type="SUPFAM" id="SSF48295">
    <property type="entry name" value="TrpR-like"/>
    <property type="match status" value="1"/>
</dbReference>
<dbReference type="PROSITE" id="PS01008">
    <property type="entry name" value="DNAA"/>
    <property type="match status" value="1"/>
</dbReference>
<comment type="function">
    <text evidence="1">Plays an essential role in the initiation and regulation of chromosomal replication. ATP-DnaA binds to the origin of replication (oriC) to initiate formation of the DNA replication initiation complex once per cell cycle. Binds the DnaA box (a 9 base pair repeat at the origin) and separates the double-stranded (ds)DNA. Forms a right-handed helical filament on oriC DNA; dsDNA binds to the exterior of the filament while single-stranded (ss)DNA is stabiized in the filament's interior. The ATP-DnaA-oriC complex binds and stabilizes one strand of the AT-rich DNA unwinding element (DUE), permitting loading of DNA polymerase. After initiation quickly degrades to an ADP-DnaA complex that is not apt for DNA replication. Binds acidic phospholipids.</text>
</comment>
<comment type="subunit">
    <text evidence="1">Oligomerizes as a right-handed, spiral filament on DNA at oriC.</text>
</comment>
<comment type="subcellular location">
    <subcellularLocation>
        <location evidence="1">Cytoplasm</location>
    </subcellularLocation>
</comment>
<comment type="domain">
    <text evidence="1">Domain I is involved in oligomerization and binding regulators, domain II is flexibile and of varying length in different bacteria, domain III forms the AAA+ region, while domain IV binds dsDNA.</text>
</comment>
<comment type="similarity">
    <text evidence="1">Belongs to the DnaA family.</text>
</comment>
<organism>
    <name type="scientific">Shewanella denitrificans (strain OS217 / ATCC BAA-1090 / DSM 15013)</name>
    <dbReference type="NCBI Taxonomy" id="318161"/>
    <lineage>
        <taxon>Bacteria</taxon>
        <taxon>Pseudomonadati</taxon>
        <taxon>Pseudomonadota</taxon>
        <taxon>Gammaproteobacteria</taxon>
        <taxon>Alteromonadales</taxon>
        <taxon>Shewanellaceae</taxon>
        <taxon>Shewanella</taxon>
    </lineage>
</organism>
<feature type="chain" id="PRO_1000048718" description="Chromosomal replication initiator protein DnaA">
    <location>
        <begin position="1"/>
        <end position="462"/>
    </location>
</feature>
<feature type="region of interest" description="Domain I, interacts with DnaA modulators" evidence="1">
    <location>
        <begin position="1"/>
        <end position="84"/>
    </location>
</feature>
<feature type="region of interest" description="Domain II" evidence="1">
    <location>
        <begin position="84"/>
        <end position="125"/>
    </location>
</feature>
<feature type="region of interest" description="Domain III, AAA+ region" evidence="1">
    <location>
        <begin position="126"/>
        <end position="342"/>
    </location>
</feature>
<feature type="region of interest" description="Domain IV, binds dsDNA" evidence="1">
    <location>
        <begin position="343"/>
        <end position="462"/>
    </location>
</feature>
<feature type="binding site" evidence="1">
    <location>
        <position position="170"/>
    </location>
    <ligand>
        <name>ATP</name>
        <dbReference type="ChEBI" id="CHEBI:30616"/>
    </ligand>
</feature>
<feature type="binding site" evidence="1">
    <location>
        <position position="172"/>
    </location>
    <ligand>
        <name>ATP</name>
        <dbReference type="ChEBI" id="CHEBI:30616"/>
    </ligand>
</feature>
<feature type="binding site" evidence="1">
    <location>
        <position position="173"/>
    </location>
    <ligand>
        <name>ATP</name>
        <dbReference type="ChEBI" id="CHEBI:30616"/>
    </ligand>
</feature>
<feature type="binding site" evidence="1">
    <location>
        <position position="174"/>
    </location>
    <ligand>
        <name>ATP</name>
        <dbReference type="ChEBI" id="CHEBI:30616"/>
    </ligand>
</feature>
<evidence type="ECO:0000255" key="1">
    <source>
        <dbReference type="HAMAP-Rule" id="MF_00377"/>
    </source>
</evidence>
<protein>
    <recommendedName>
        <fullName evidence="1">Chromosomal replication initiator protein DnaA</fullName>
    </recommendedName>
</protein>